<sequence length="178" mass="20057">MVKYTEDRLLELKEETYIPQPQILEAFNQMIESVKEHAAAEAEKHKAIKWNNGDTYIDEHGNERPYHHMNRRRASRTANKPSLRKKSVENVDEDGWATLSKPKRSFGADEGLEERAKFRESVREGTVGGSGTVKAKPNNKNLGSSKAVDPRDAIADKHTTTFNAFEALGDGDDDDDDE</sequence>
<feature type="chain" id="PRO_0000330090" description="Cap-associated protein CAF20">
    <location>
        <begin position="1"/>
        <end position="178"/>
    </location>
</feature>
<feature type="region of interest" description="Disordered" evidence="2">
    <location>
        <begin position="61"/>
        <end position="155"/>
    </location>
</feature>
<feature type="compositionally biased region" description="Basic and acidic residues" evidence="2">
    <location>
        <begin position="113"/>
        <end position="123"/>
    </location>
</feature>
<accession>A3LQ93</accession>
<organism>
    <name type="scientific">Scheffersomyces stipitis (strain ATCC 58785 / CBS 6054 / NBRC 10063 / NRRL Y-11545)</name>
    <name type="common">Yeast</name>
    <name type="synonym">Pichia stipitis</name>
    <dbReference type="NCBI Taxonomy" id="322104"/>
    <lineage>
        <taxon>Eukaryota</taxon>
        <taxon>Fungi</taxon>
        <taxon>Dikarya</taxon>
        <taxon>Ascomycota</taxon>
        <taxon>Saccharomycotina</taxon>
        <taxon>Pichiomycetes</taxon>
        <taxon>Debaryomycetaceae</taxon>
        <taxon>Scheffersomyces</taxon>
    </lineage>
</organism>
<comment type="function">
    <text evidence="1">Acts as an inhibitor of cap-dependent translation. Competes with eIF4G1 and EAP1 for binding to eIF4E and interferes with the formation of the eIF4F complex, inhibiting translation and stabilizing mRNA (By similarity).</text>
</comment>
<comment type="subcellular location">
    <subcellularLocation>
        <location evidence="1">Cytoplasm</location>
    </subcellularLocation>
</comment>
<comment type="similarity">
    <text evidence="3">Belongs to the CAF20 family.</text>
</comment>
<reference key="1">
    <citation type="journal article" date="2007" name="Nat. Biotechnol.">
        <title>Genome sequence of the lignocellulose-bioconverting and xylose-fermenting yeast Pichia stipitis.</title>
        <authorList>
            <person name="Jeffries T.W."/>
            <person name="Grigoriev I.V."/>
            <person name="Grimwood J."/>
            <person name="Laplaza J.M."/>
            <person name="Aerts A."/>
            <person name="Salamov A."/>
            <person name="Schmutz J."/>
            <person name="Lindquist E."/>
            <person name="Dehal P."/>
            <person name="Shapiro H."/>
            <person name="Jin Y.-S."/>
            <person name="Passoth V."/>
            <person name="Richardson P.M."/>
        </authorList>
    </citation>
    <scope>NUCLEOTIDE SEQUENCE [LARGE SCALE GENOMIC DNA]</scope>
    <source>
        <strain>ATCC 58785 / CBS 6054 / NBRC 10063 / NRRL Y-11545</strain>
    </source>
</reference>
<gene>
    <name type="primary">CAF20</name>
    <name type="ORF">PICST_88036</name>
</gene>
<protein>
    <recommendedName>
        <fullName>Cap-associated protein CAF20</fullName>
    </recommendedName>
</protein>
<dbReference type="EMBL" id="CP000496">
    <property type="protein sequence ID" value="ABN65168.1"/>
    <property type="molecule type" value="Genomic_DNA"/>
</dbReference>
<dbReference type="RefSeq" id="XP_001383197.1">
    <property type="nucleotide sequence ID" value="XM_001383160.1"/>
</dbReference>
<dbReference type="SMR" id="A3LQ93"/>
<dbReference type="FunCoup" id="A3LQ93">
    <property type="interactions" value="375"/>
</dbReference>
<dbReference type="STRING" id="322104.A3LQ93"/>
<dbReference type="GeneID" id="4837250"/>
<dbReference type="KEGG" id="pic:PICST_88036"/>
<dbReference type="eggNOG" id="ENOG502S2E7">
    <property type="taxonomic scope" value="Eukaryota"/>
</dbReference>
<dbReference type="HOGENOM" id="CLU_128343_0_0_1"/>
<dbReference type="InParanoid" id="A3LQ93"/>
<dbReference type="OMA" id="GRPKVKH"/>
<dbReference type="OrthoDB" id="3995390at2759"/>
<dbReference type="Proteomes" id="UP000002258">
    <property type="component" value="Chromosome 2"/>
</dbReference>
<dbReference type="GO" id="GO:0005737">
    <property type="term" value="C:cytoplasm"/>
    <property type="evidence" value="ECO:0007669"/>
    <property type="project" value="UniProtKB-SubCell"/>
</dbReference>
<dbReference type="GO" id="GO:0008190">
    <property type="term" value="F:eukaryotic initiation factor 4E binding"/>
    <property type="evidence" value="ECO:0007669"/>
    <property type="project" value="InterPro"/>
</dbReference>
<dbReference type="GO" id="GO:0003743">
    <property type="term" value="F:translation initiation factor activity"/>
    <property type="evidence" value="ECO:0007669"/>
    <property type="project" value="UniProtKB-KW"/>
</dbReference>
<dbReference type="GO" id="GO:0017148">
    <property type="term" value="P:negative regulation of translation"/>
    <property type="evidence" value="ECO:0007669"/>
    <property type="project" value="UniProtKB-KW"/>
</dbReference>
<dbReference type="InterPro" id="IPR031456">
    <property type="entry name" value="Caf20"/>
</dbReference>
<dbReference type="Pfam" id="PF17052">
    <property type="entry name" value="CAF20"/>
    <property type="match status" value="1"/>
</dbReference>
<proteinExistence type="inferred from homology"/>
<name>CAF20_PICST</name>
<evidence type="ECO:0000250" key="1"/>
<evidence type="ECO:0000256" key="2">
    <source>
        <dbReference type="SAM" id="MobiDB-lite"/>
    </source>
</evidence>
<evidence type="ECO:0000305" key="3"/>
<keyword id="KW-0963">Cytoplasm</keyword>
<keyword id="KW-0396">Initiation factor</keyword>
<keyword id="KW-0597">Phosphoprotein</keyword>
<keyword id="KW-0648">Protein biosynthesis</keyword>
<keyword id="KW-0652">Protein synthesis inhibitor</keyword>
<keyword id="KW-1185">Reference proteome</keyword>
<keyword id="KW-0810">Translation regulation</keyword>